<dbReference type="EMBL" id="BX908798">
    <property type="protein sequence ID" value="CAF23427.1"/>
    <property type="molecule type" value="Genomic_DNA"/>
</dbReference>
<dbReference type="RefSeq" id="WP_011175253.1">
    <property type="nucleotide sequence ID" value="NC_005861.2"/>
</dbReference>
<dbReference type="SMR" id="Q6MDC2"/>
<dbReference type="STRING" id="264201.pc0703"/>
<dbReference type="KEGG" id="pcu:PC_RS03380"/>
<dbReference type="eggNOG" id="COG0291">
    <property type="taxonomic scope" value="Bacteria"/>
</dbReference>
<dbReference type="HOGENOM" id="CLU_169643_3_0_0"/>
<dbReference type="OrthoDB" id="47476at2"/>
<dbReference type="Proteomes" id="UP000000529">
    <property type="component" value="Chromosome"/>
</dbReference>
<dbReference type="GO" id="GO:0022625">
    <property type="term" value="C:cytosolic large ribosomal subunit"/>
    <property type="evidence" value="ECO:0007669"/>
    <property type="project" value="TreeGrafter"/>
</dbReference>
<dbReference type="GO" id="GO:0003735">
    <property type="term" value="F:structural constituent of ribosome"/>
    <property type="evidence" value="ECO:0007669"/>
    <property type="project" value="InterPro"/>
</dbReference>
<dbReference type="GO" id="GO:0006412">
    <property type="term" value="P:translation"/>
    <property type="evidence" value="ECO:0007669"/>
    <property type="project" value="UniProtKB-UniRule"/>
</dbReference>
<dbReference type="FunFam" id="4.10.410.60:FF:000001">
    <property type="entry name" value="50S ribosomal protein L35"/>
    <property type="match status" value="1"/>
</dbReference>
<dbReference type="Gene3D" id="4.10.410.60">
    <property type="match status" value="1"/>
</dbReference>
<dbReference type="HAMAP" id="MF_00514">
    <property type="entry name" value="Ribosomal_bL35"/>
    <property type="match status" value="1"/>
</dbReference>
<dbReference type="InterPro" id="IPR001706">
    <property type="entry name" value="Ribosomal_bL35"/>
</dbReference>
<dbReference type="InterPro" id="IPR021137">
    <property type="entry name" value="Ribosomal_bL35-like"/>
</dbReference>
<dbReference type="InterPro" id="IPR037229">
    <property type="entry name" value="Ribosomal_bL35_sf"/>
</dbReference>
<dbReference type="NCBIfam" id="TIGR00001">
    <property type="entry name" value="rpmI_bact"/>
    <property type="match status" value="1"/>
</dbReference>
<dbReference type="PANTHER" id="PTHR33343">
    <property type="entry name" value="54S RIBOSOMAL PROTEIN BL35M"/>
    <property type="match status" value="1"/>
</dbReference>
<dbReference type="PANTHER" id="PTHR33343:SF1">
    <property type="entry name" value="LARGE RIBOSOMAL SUBUNIT PROTEIN BL35M"/>
    <property type="match status" value="1"/>
</dbReference>
<dbReference type="Pfam" id="PF01632">
    <property type="entry name" value="Ribosomal_L35p"/>
    <property type="match status" value="1"/>
</dbReference>
<dbReference type="PRINTS" id="PR00064">
    <property type="entry name" value="RIBOSOMALL35"/>
</dbReference>
<dbReference type="SUPFAM" id="SSF143034">
    <property type="entry name" value="L35p-like"/>
    <property type="match status" value="1"/>
</dbReference>
<gene>
    <name evidence="1" type="primary">rpmI</name>
    <name type="ordered locus">pc0703</name>
</gene>
<sequence length="64" mass="7386">MPKMKTRKAVASKFRVTATGKLKASRPGRRHKLTGKTPKRKRQLRRPGLVDDGHLKTYKRLMCL</sequence>
<proteinExistence type="inferred from homology"/>
<keyword id="KW-1185">Reference proteome</keyword>
<keyword id="KW-0687">Ribonucleoprotein</keyword>
<keyword id="KW-0689">Ribosomal protein</keyword>
<protein>
    <recommendedName>
        <fullName evidence="1">Large ribosomal subunit protein bL35</fullName>
    </recommendedName>
    <alternativeName>
        <fullName evidence="3">50S ribosomal protein L35</fullName>
    </alternativeName>
</protein>
<comment type="similarity">
    <text evidence="1">Belongs to the bacterial ribosomal protein bL35 family.</text>
</comment>
<reference key="1">
    <citation type="journal article" date="2004" name="Science">
        <title>Illuminating the evolutionary history of chlamydiae.</title>
        <authorList>
            <person name="Horn M."/>
            <person name="Collingro A."/>
            <person name="Schmitz-Esser S."/>
            <person name="Beier C.L."/>
            <person name="Purkhold U."/>
            <person name="Fartmann B."/>
            <person name="Brandt P."/>
            <person name="Nyakatura G.J."/>
            <person name="Droege M."/>
            <person name="Frishman D."/>
            <person name="Rattei T."/>
            <person name="Mewes H.-W."/>
            <person name="Wagner M."/>
        </authorList>
    </citation>
    <scope>NUCLEOTIDE SEQUENCE [LARGE SCALE GENOMIC DNA]</scope>
    <source>
        <strain>UWE25</strain>
    </source>
</reference>
<organism>
    <name type="scientific">Protochlamydia amoebophila (strain UWE25)</name>
    <dbReference type="NCBI Taxonomy" id="264201"/>
    <lineage>
        <taxon>Bacteria</taxon>
        <taxon>Pseudomonadati</taxon>
        <taxon>Chlamydiota</taxon>
        <taxon>Chlamydiia</taxon>
        <taxon>Parachlamydiales</taxon>
        <taxon>Parachlamydiaceae</taxon>
        <taxon>Candidatus Protochlamydia</taxon>
    </lineage>
</organism>
<feature type="chain" id="PRO_0000177394" description="Large ribosomal subunit protein bL35">
    <location>
        <begin position="1"/>
        <end position="64"/>
    </location>
</feature>
<feature type="region of interest" description="Disordered" evidence="2">
    <location>
        <begin position="19"/>
        <end position="44"/>
    </location>
</feature>
<feature type="compositionally biased region" description="Basic residues" evidence="2">
    <location>
        <begin position="23"/>
        <end position="44"/>
    </location>
</feature>
<accession>Q6MDC2</accession>
<evidence type="ECO:0000255" key="1">
    <source>
        <dbReference type="HAMAP-Rule" id="MF_00514"/>
    </source>
</evidence>
<evidence type="ECO:0000256" key="2">
    <source>
        <dbReference type="SAM" id="MobiDB-lite"/>
    </source>
</evidence>
<evidence type="ECO:0000305" key="3"/>
<name>RL35_PARUW</name>